<accession>Q41253</accession>
<comment type="function">
    <text>Could participate in a signal transduction pathway that controls cytoskeletal organization.</text>
</comment>
<comment type="function">
    <text evidence="1">Inactive GDP-bound Rho GTPases reside in the cytosol, are found in a complex with Rho GDP-dissociation inhibitors (Rho GDIs), and are released from the GDI protein in order to translocate to membranes upon activation.</text>
</comment>
<comment type="subcellular location">
    <subcellularLocation>
        <location evidence="1">Cytoplasm</location>
    </subcellularLocation>
    <subcellularLocation>
        <location evidence="1">Membrane</location>
        <topology evidence="1">Peripheral membrane protein</topology>
    </subcellularLocation>
    <text>Associated with the membrane when activated.</text>
</comment>
<comment type="developmental stage">
    <text>Highly enhanced expression in developing cotton fibers, with maximal expression occurring at the time of transition between primary and secondary wall synthesis.</text>
</comment>
<comment type="similarity">
    <text evidence="3">Belongs to the small GTPase superfamily. Rho family.</text>
</comment>
<sequence length="196" mass="21800">MSTARFIKCVTVGDGAVGKTCMLISYTSNTFPTDYVPTVFDNFSANVVVDGSTVNLGLWDTAGQEDYNRLRPLSYRGADVFLLAFSLISKASYENIYKKWIPELRHYAHNVPVVLVGTKLDLRDDKQFLIDHPGATPISTSQGEELKKMIGAVTYIECSSKTQQNVKAVFDAAIKVALRPPKPKRKPCKRRTCAFL</sequence>
<dbReference type="EMBL" id="S79308">
    <property type="protein sequence ID" value="AAB35093.1"/>
    <property type="molecule type" value="mRNA"/>
</dbReference>
<dbReference type="PIR" id="S57325">
    <property type="entry name" value="S57325"/>
</dbReference>
<dbReference type="RefSeq" id="XP_016710996.1">
    <property type="nucleotide sequence ID" value="XM_016855507.1"/>
</dbReference>
<dbReference type="SMR" id="Q41253"/>
<dbReference type="STRING" id="3635.Q41253"/>
<dbReference type="PaxDb" id="3635-Q41253"/>
<dbReference type="KEGG" id="ghi:107924928"/>
<dbReference type="OMA" id="CHEVRHH"/>
<dbReference type="Proteomes" id="UP000189702">
    <property type="component" value="Unplaced"/>
</dbReference>
<dbReference type="GO" id="GO:0042995">
    <property type="term" value="C:cell projection"/>
    <property type="evidence" value="ECO:0000318"/>
    <property type="project" value="GO_Central"/>
</dbReference>
<dbReference type="GO" id="GO:0031410">
    <property type="term" value="C:cytoplasmic vesicle"/>
    <property type="evidence" value="ECO:0000318"/>
    <property type="project" value="GO_Central"/>
</dbReference>
<dbReference type="GO" id="GO:0005856">
    <property type="term" value="C:cytoskeleton"/>
    <property type="evidence" value="ECO:0000318"/>
    <property type="project" value="GO_Central"/>
</dbReference>
<dbReference type="GO" id="GO:0005886">
    <property type="term" value="C:plasma membrane"/>
    <property type="evidence" value="ECO:0000318"/>
    <property type="project" value="GO_Central"/>
</dbReference>
<dbReference type="GO" id="GO:0005525">
    <property type="term" value="F:GTP binding"/>
    <property type="evidence" value="ECO:0000318"/>
    <property type="project" value="GO_Central"/>
</dbReference>
<dbReference type="GO" id="GO:0003924">
    <property type="term" value="F:GTPase activity"/>
    <property type="evidence" value="ECO:0000318"/>
    <property type="project" value="GO_Central"/>
</dbReference>
<dbReference type="GO" id="GO:0019901">
    <property type="term" value="F:protein kinase binding"/>
    <property type="evidence" value="ECO:0000318"/>
    <property type="project" value="GO_Central"/>
</dbReference>
<dbReference type="GO" id="GO:0007015">
    <property type="term" value="P:actin filament organization"/>
    <property type="evidence" value="ECO:0000318"/>
    <property type="project" value="GO_Central"/>
</dbReference>
<dbReference type="GO" id="GO:0030865">
    <property type="term" value="P:cortical cytoskeleton organization"/>
    <property type="evidence" value="ECO:0000318"/>
    <property type="project" value="GO_Central"/>
</dbReference>
<dbReference type="GO" id="GO:0007163">
    <property type="term" value="P:establishment or maintenance of cell polarity"/>
    <property type="evidence" value="ECO:0000318"/>
    <property type="project" value="GO_Central"/>
</dbReference>
<dbReference type="GO" id="GO:0009834">
    <property type="term" value="P:plant-type secondary cell wall biogenesis"/>
    <property type="evidence" value="ECO:0000304"/>
    <property type="project" value="AgBase"/>
</dbReference>
<dbReference type="GO" id="GO:0032956">
    <property type="term" value="P:regulation of actin cytoskeleton organization"/>
    <property type="evidence" value="ECO:0000318"/>
    <property type="project" value="GO_Central"/>
</dbReference>
<dbReference type="GO" id="GO:0008360">
    <property type="term" value="P:regulation of cell shape"/>
    <property type="evidence" value="ECO:0000318"/>
    <property type="project" value="GO_Central"/>
</dbReference>
<dbReference type="GO" id="GO:0090379">
    <property type="term" value="P:secondary cell wall biogenesis involved in seed trichome differentiation"/>
    <property type="evidence" value="ECO:0000270"/>
    <property type="project" value="AgBase"/>
</dbReference>
<dbReference type="GO" id="GO:0007165">
    <property type="term" value="P:signal transduction"/>
    <property type="evidence" value="ECO:0000318"/>
    <property type="project" value="GO_Central"/>
</dbReference>
<dbReference type="GO" id="GO:0007264">
    <property type="term" value="P:small GTPase-mediated signal transduction"/>
    <property type="evidence" value="ECO:0007669"/>
    <property type="project" value="InterPro"/>
</dbReference>
<dbReference type="CDD" id="cd04133">
    <property type="entry name" value="Rop_like"/>
    <property type="match status" value="1"/>
</dbReference>
<dbReference type="FunFam" id="3.40.50.300:FF:000535">
    <property type="entry name" value="rac-like GTP-binding protein RAC2"/>
    <property type="match status" value="1"/>
</dbReference>
<dbReference type="Gene3D" id="3.40.50.300">
    <property type="entry name" value="P-loop containing nucleotide triphosphate hydrolases"/>
    <property type="match status" value="1"/>
</dbReference>
<dbReference type="InterPro" id="IPR027417">
    <property type="entry name" value="P-loop_NTPase"/>
</dbReference>
<dbReference type="InterPro" id="IPR005225">
    <property type="entry name" value="Small_GTP-bd"/>
</dbReference>
<dbReference type="InterPro" id="IPR001806">
    <property type="entry name" value="Small_GTPase"/>
</dbReference>
<dbReference type="InterPro" id="IPR003578">
    <property type="entry name" value="Small_GTPase_Rho"/>
</dbReference>
<dbReference type="NCBIfam" id="TIGR00231">
    <property type="entry name" value="small_GTP"/>
    <property type="match status" value="1"/>
</dbReference>
<dbReference type="PANTHER" id="PTHR24072">
    <property type="entry name" value="RHO FAMILY GTPASE"/>
    <property type="match status" value="1"/>
</dbReference>
<dbReference type="Pfam" id="PF00071">
    <property type="entry name" value="Ras"/>
    <property type="match status" value="1"/>
</dbReference>
<dbReference type="PRINTS" id="PR00449">
    <property type="entry name" value="RASTRNSFRMNG"/>
</dbReference>
<dbReference type="SMART" id="SM00175">
    <property type="entry name" value="RAB"/>
    <property type="match status" value="1"/>
</dbReference>
<dbReference type="SMART" id="SM00173">
    <property type="entry name" value="RAS"/>
    <property type="match status" value="1"/>
</dbReference>
<dbReference type="SMART" id="SM00174">
    <property type="entry name" value="RHO"/>
    <property type="match status" value="1"/>
</dbReference>
<dbReference type="SUPFAM" id="SSF52540">
    <property type="entry name" value="P-loop containing nucleoside triphosphate hydrolases"/>
    <property type="match status" value="1"/>
</dbReference>
<dbReference type="PROSITE" id="PS51420">
    <property type="entry name" value="RHO"/>
    <property type="match status" value="1"/>
</dbReference>
<protein>
    <recommendedName>
        <fullName>Rac-like GTP-binding protein RAC13</fullName>
    </recommendedName>
</protein>
<feature type="chain" id="PRO_0000198928" description="Rac-like GTP-binding protein RAC13">
    <location>
        <begin position="1"/>
        <end position="193"/>
    </location>
</feature>
<feature type="propeptide" id="PRO_0000227590" description="Removed in mature form" evidence="2">
    <location>
        <begin position="194"/>
        <end position="196"/>
    </location>
</feature>
<feature type="short sequence motif" description="Effector region" evidence="2">
    <location>
        <begin position="35"/>
        <end position="43"/>
    </location>
</feature>
<feature type="binding site" evidence="1">
    <location>
        <begin position="13"/>
        <end position="20"/>
    </location>
    <ligand>
        <name>GTP</name>
        <dbReference type="ChEBI" id="CHEBI:37565"/>
    </ligand>
</feature>
<feature type="binding site" evidence="1">
    <location>
        <begin position="60"/>
        <end position="64"/>
    </location>
    <ligand>
        <name>GTP</name>
        <dbReference type="ChEBI" id="CHEBI:37565"/>
    </ligand>
</feature>
<feature type="binding site" evidence="1">
    <location>
        <begin position="118"/>
        <end position="121"/>
    </location>
    <ligand>
        <name>GTP</name>
        <dbReference type="ChEBI" id="CHEBI:37565"/>
    </ligand>
</feature>
<feature type="modified residue" description="Cysteine methyl ester" evidence="2">
    <location>
        <position position="193"/>
    </location>
</feature>
<feature type="lipid moiety-binding region" description="S-geranylgeranyl cysteine" evidence="2">
    <location>
        <position position="193"/>
    </location>
</feature>
<organism>
    <name type="scientific">Gossypium hirsutum</name>
    <name type="common">Upland cotton</name>
    <name type="synonym">Gossypium mexicanum</name>
    <dbReference type="NCBI Taxonomy" id="3635"/>
    <lineage>
        <taxon>Eukaryota</taxon>
        <taxon>Viridiplantae</taxon>
        <taxon>Streptophyta</taxon>
        <taxon>Embryophyta</taxon>
        <taxon>Tracheophyta</taxon>
        <taxon>Spermatophyta</taxon>
        <taxon>Magnoliopsida</taxon>
        <taxon>eudicotyledons</taxon>
        <taxon>Gunneridae</taxon>
        <taxon>Pentapetalae</taxon>
        <taxon>rosids</taxon>
        <taxon>malvids</taxon>
        <taxon>Malvales</taxon>
        <taxon>Malvaceae</taxon>
        <taxon>Malvoideae</taxon>
        <taxon>Gossypium</taxon>
    </lineage>
</organism>
<gene>
    <name type="primary">RAC13</name>
</gene>
<reference key="1">
    <citation type="journal article" date="1995" name="Mol. Gen. Genet.">
        <title>Genes encoding small GTP-binding proteins analogous to mammalian rac are preferentially expressed in developing cotton fibers.</title>
        <authorList>
            <person name="Delmer D.P."/>
            <person name="Pear J.R."/>
            <person name="Andrawis A."/>
            <person name="Stalker D.M."/>
        </authorList>
    </citation>
    <scope>NUCLEOTIDE SEQUENCE [MRNA]</scope>
    <source>
        <strain>cv. Acala SJ2</strain>
    </source>
</reference>
<keyword id="KW-0963">Cytoplasm</keyword>
<keyword id="KW-0342">GTP-binding</keyword>
<keyword id="KW-0449">Lipoprotein</keyword>
<keyword id="KW-0472">Membrane</keyword>
<keyword id="KW-0488">Methylation</keyword>
<keyword id="KW-0547">Nucleotide-binding</keyword>
<keyword id="KW-0636">Prenylation</keyword>
<keyword id="KW-1185">Reference proteome</keyword>
<name>RAC13_GOSHI</name>
<proteinExistence type="evidence at transcript level"/>
<evidence type="ECO:0000250" key="1"/>
<evidence type="ECO:0000255" key="2"/>
<evidence type="ECO:0000305" key="3"/>